<organism>
    <name type="scientific">Methanothrix thermoacetophila (strain DSM 6194 / JCM 14653 / NBRC 101360 / PT)</name>
    <name type="common">Methanosaeta thermophila</name>
    <dbReference type="NCBI Taxonomy" id="349307"/>
    <lineage>
        <taxon>Archaea</taxon>
        <taxon>Methanobacteriati</taxon>
        <taxon>Methanobacteriota</taxon>
        <taxon>Stenosarchaea group</taxon>
        <taxon>Methanomicrobia</taxon>
        <taxon>Methanotrichales</taxon>
        <taxon>Methanotrichaceae</taxon>
        <taxon>Methanothrix</taxon>
    </lineage>
</organism>
<proteinExistence type="inferred from homology"/>
<gene>
    <name evidence="1" type="primary">hemL</name>
    <name type="ordered locus">Mthe_1126</name>
</gene>
<evidence type="ECO:0000255" key="1">
    <source>
        <dbReference type="HAMAP-Rule" id="MF_00375"/>
    </source>
</evidence>
<reference key="1">
    <citation type="submission" date="2006-10" db="EMBL/GenBank/DDBJ databases">
        <title>Complete sequence of Methanosaeta thermophila PT.</title>
        <authorList>
            <consortium name="US DOE Joint Genome Institute"/>
            <person name="Copeland A."/>
            <person name="Lucas S."/>
            <person name="Lapidus A."/>
            <person name="Barry K."/>
            <person name="Detter J.C."/>
            <person name="Glavina del Rio T."/>
            <person name="Hammon N."/>
            <person name="Israni S."/>
            <person name="Pitluck S."/>
            <person name="Chain P."/>
            <person name="Malfatti S."/>
            <person name="Shin M."/>
            <person name="Vergez L."/>
            <person name="Schmutz J."/>
            <person name="Larimer F."/>
            <person name="Land M."/>
            <person name="Hauser L."/>
            <person name="Kyrpides N."/>
            <person name="Kim E."/>
            <person name="Smith K.S."/>
            <person name="Ingram-Smith C."/>
            <person name="Richardson P."/>
        </authorList>
    </citation>
    <scope>NUCLEOTIDE SEQUENCE [LARGE SCALE GENOMIC DNA]</scope>
    <source>
        <strain>DSM 6194 / JCM 14653 / NBRC 101360 / PT</strain>
    </source>
</reference>
<accession>A0B885</accession>
<comment type="catalytic activity">
    <reaction evidence="1">
        <text>(S)-4-amino-5-oxopentanoate = 5-aminolevulinate</text>
        <dbReference type="Rhea" id="RHEA:14265"/>
        <dbReference type="ChEBI" id="CHEBI:57501"/>
        <dbReference type="ChEBI" id="CHEBI:356416"/>
        <dbReference type="EC" id="5.4.3.8"/>
    </reaction>
</comment>
<comment type="cofactor">
    <cofactor evidence="1">
        <name>pyridoxal 5'-phosphate</name>
        <dbReference type="ChEBI" id="CHEBI:597326"/>
    </cofactor>
</comment>
<comment type="pathway">
    <text evidence="1">Porphyrin-containing compound metabolism; protoporphyrin-IX biosynthesis; 5-aminolevulinate from L-glutamyl-tRNA(Glu): step 2/2.</text>
</comment>
<comment type="subcellular location">
    <subcellularLocation>
        <location evidence="1">Cytoplasm</location>
    </subcellularLocation>
</comment>
<comment type="similarity">
    <text evidence="1">Belongs to the class-III pyridoxal-phosphate-dependent aminotransferase family. HemL subfamily.</text>
</comment>
<feature type="chain" id="PRO_0000382407" description="Glutamate-1-semialdehyde 2,1-aminomutase">
    <location>
        <begin position="1"/>
        <end position="429"/>
    </location>
</feature>
<feature type="modified residue" description="N6-(pyridoxal phosphate)lysine" evidence="1">
    <location>
        <position position="272"/>
    </location>
</feature>
<keyword id="KW-0963">Cytoplasm</keyword>
<keyword id="KW-0413">Isomerase</keyword>
<keyword id="KW-0627">Porphyrin biosynthesis</keyword>
<keyword id="KW-0663">Pyridoxal phosphate</keyword>
<keyword id="KW-1185">Reference proteome</keyword>
<protein>
    <recommendedName>
        <fullName evidence="1">Glutamate-1-semialdehyde 2,1-aminomutase</fullName>
        <shortName evidence="1">GSA</shortName>
        <ecNumber evidence="1">5.4.3.8</ecNumber>
    </recommendedName>
    <alternativeName>
        <fullName evidence="1">Glutamate-1-semialdehyde aminotransferase</fullName>
        <shortName evidence="1">GSA-AT</shortName>
    </alternativeName>
</protein>
<dbReference type="EC" id="5.4.3.8" evidence="1"/>
<dbReference type="EMBL" id="CP000477">
    <property type="protein sequence ID" value="ABK14909.1"/>
    <property type="molecule type" value="Genomic_DNA"/>
</dbReference>
<dbReference type="SMR" id="A0B885"/>
<dbReference type="STRING" id="349307.Mthe_1126"/>
<dbReference type="KEGG" id="mtp:Mthe_1126"/>
<dbReference type="HOGENOM" id="CLU_016922_1_5_2"/>
<dbReference type="UniPathway" id="UPA00251">
    <property type="reaction ID" value="UER00317"/>
</dbReference>
<dbReference type="Proteomes" id="UP000000674">
    <property type="component" value="Chromosome"/>
</dbReference>
<dbReference type="GO" id="GO:0005737">
    <property type="term" value="C:cytoplasm"/>
    <property type="evidence" value="ECO:0007669"/>
    <property type="project" value="UniProtKB-SubCell"/>
</dbReference>
<dbReference type="GO" id="GO:0042286">
    <property type="term" value="F:glutamate-1-semialdehyde 2,1-aminomutase activity"/>
    <property type="evidence" value="ECO:0007669"/>
    <property type="project" value="UniProtKB-UniRule"/>
</dbReference>
<dbReference type="GO" id="GO:0030170">
    <property type="term" value="F:pyridoxal phosphate binding"/>
    <property type="evidence" value="ECO:0007669"/>
    <property type="project" value="InterPro"/>
</dbReference>
<dbReference type="GO" id="GO:0008483">
    <property type="term" value="F:transaminase activity"/>
    <property type="evidence" value="ECO:0007669"/>
    <property type="project" value="InterPro"/>
</dbReference>
<dbReference type="GO" id="GO:0006782">
    <property type="term" value="P:protoporphyrinogen IX biosynthetic process"/>
    <property type="evidence" value="ECO:0007669"/>
    <property type="project" value="UniProtKB-UniRule"/>
</dbReference>
<dbReference type="CDD" id="cd00610">
    <property type="entry name" value="OAT_like"/>
    <property type="match status" value="1"/>
</dbReference>
<dbReference type="FunFam" id="3.40.640.10:FF:000021">
    <property type="entry name" value="Glutamate-1-semialdehyde 2,1-aminomutase"/>
    <property type="match status" value="1"/>
</dbReference>
<dbReference type="Gene3D" id="3.90.1150.10">
    <property type="entry name" value="Aspartate Aminotransferase, domain 1"/>
    <property type="match status" value="1"/>
</dbReference>
<dbReference type="Gene3D" id="3.40.640.10">
    <property type="entry name" value="Type I PLP-dependent aspartate aminotransferase-like (Major domain)"/>
    <property type="match status" value="1"/>
</dbReference>
<dbReference type="HAMAP" id="MF_00375">
    <property type="entry name" value="HemL_aminotrans_3"/>
    <property type="match status" value="1"/>
</dbReference>
<dbReference type="InterPro" id="IPR004639">
    <property type="entry name" value="4pyrrol_synth_GluAld_NH2Trfase"/>
</dbReference>
<dbReference type="InterPro" id="IPR005814">
    <property type="entry name" value="Aminotrans_3"/>
</dbReference>
<dbReference type="InterPro" id="IPR049704">
    <property type="entry name" value="Aminotrans_3_PPA_site"/>
</dbReference>
<dbReference type="InterPro" id="IPR015424">
    <property type="entry name" value="PyrdxlP-dep_Trfase"/>
</dbReference>
<dbReference type="InterPro" id="IPR015421">
    <property type="entry name" value="PyrdxlP-dep_Trfase_major"/>
</dbReference>
<dbReference type="InterPro" id="IPR015422">
    <property type="entry name" value="PyrdxlP-dep_Trfase_small"/>
</dbReference>
<dbReference type="NCBIfam" id="TIGR00713">
    <property type="entry name" value="hemL"/>
    <property type="match status" value="1"/>
</dbReference>
<dbReference type="NCBIfam" id="NF000818">
    <property type="entry name" value="PRK00062.1"/>
    <property type="match status" value="1"/>
</dbReference>
<dbReference type="PANTHER" id="PTHR43713">
    <property type="entry name" value="GLUTAMATE-1-SEMIALDEHYDE 2,1-AMINOMUTASE"/>
    <property type="match status" value="1"/>
</dbReference>
<dbReference type="PANTHER" id="PTHR43713:SF3">
    <property type="entry name" value="GLUTAMATE-1-SEMIALDEHYDE 2,1-AMINOMUTASE 1, CHLOROPLASTIC-RELATED"/>
    <property type="match status" value="1"/>
</dbReference>
<dbReference type="Pfam" id="PF00202">
    <property type="entry name" value="Aminotran_3"/>
    <property type="match status" value="1"/>
</dbReference>
<dbReference type="SUPFAM" id="SSF53383">
    <property type="entry name" value="PLP-dependent transferases"/>
    <property type="match status" value="1"/>
</dbReference>
<dbReference type="PROSITE" id="PS00600">
    <property type="entry name" value="AA_TRANSFER_CLASS_3"/>
    <property type="match status" value="1"/>
</dbReference>
<name>GSA_METTP</name>
<sequence>MIRSHVSADTMNLNSSRSLYERAKRLMPGGVSSPVRAIRPYPFYVKRAEGPYLWDEDGNSFIDYCLAYGPMILGHRNPEVMRKVEEQIERGWLYGTPTALEVELAERIISHYPSIEMIRFVSTGTEATMAALRIARGFTGKDKIVKIEGGFHGAHDSVLVKAGSGATTIGVPDSKGVPADTAKNTVLVPYNDIQAMEAALREDDVAAVIMEPVLGNIGPVLPMDGYLEGVRRITEEHDALLIFDEVITGFRLALGGAQSYYRVRADITTLGKIIGGGFPIGAVGGRREIMENVAPQGGIYQAGTFNGSPVSMAAGLATLDILERGVLDRINEMGSYLRKGISDIVEDLKLDYSVSGVASMFKVFFGPLPRNYSEALRCDKEGYLRFFWRMLEAGIFLTPSQYETDFISASHDKEIIDKTLEAFKLFLKG</sequence>